<sequence>MADVYPANDSTASQDVANRFARKGALRQKNVHEVKDHKFIARFFKQPTFCSHCTDFIWGFGKQGFQCQVCCFVVHKRCHEFVTFSCPGADKGPDTDDPRSKHKFKIHTYGSPTFCDHCGSLLYGLIHQGMKCDTCDMNVHKQCVINDPSLCGMDHTEKRGRIYLKAEVTDEKLHVTVRDAKNLIPMDPNGLSDPYVKLKLIPDPKNESKQKTKTIRSNLNPQWNESFTFKLKPSDKDRRLSVEIWDWDRTTRNDFMGSLSFGVSELMKMPASGWYKAHNQEEGEYYNVPIPEGDEEGNMELRQKFEKAKLGPVGNKVISPSEDRKQPSNNLDRVKLTDFNFLMVLGKGSFGKVMLADRKGTEELYAIKILKKDVVIQDDDVECTMVEKRVLALLDKPPFLTQLHSCFQTVDRLYFVMEYVNGGDLMYHIQQVGKFKEPQAVFYAAEISIGLFFLHKRGIIYRDLKLNNVMLNSEGHIKIADFGMCKEHMMDGVTTRTFCGTPDYIAPEIIAYQPYGKSVDWWAYGVLLYEMLAGQPPFDGEDEDELFQSIMEHNVSYPKSLSKEAVSICKGLMTKQPAKRLGCGPEGERDVREHAFFRRIDWEKLENREIQPPFKPKVCGKGAENFDKFFTRGQPVLTPPDQLVIANIDQSDFEGFSYVNPQFVHPILQSAV</sequence>
<proteinExistence type="evidence at protein level"/>
<dbReference type="EC" id="2.7.11.13" evidence="4"/>
<dbReference type="EMBL" id="M25811">
    <property type="protein sequence ID" value="AAA39934.1"/>
    <property type="molecule type" value="mRNA"/>
</dbReference>
<dbReference type="EMBL" id="X52685">
    <property type="protein sequence ID" value="CAA36908.1"/>
    <property type="molecule type" value="mRNA"/>
</dbReference>
<dbReference type="EMBL" id="X52684">
    <property type="protein sequence ID" value="CAA36907.1"/>
    <property type="molecule type" value="mRNA"/>
</dbReference>
<dbReference type="PIR" id="S07104">
    <property type="entry name" value="KIMSCA"/>
</dbReference>
<dbReference type="RefSeq" id="NP_035231.2">
    <property type="nucleotide sequence ID" value="NM_011101.3"/>
</dbReference>
<dbReference type="BMRB" id="P20444"/>
<dbReference type="SMR" id="P20444"/>
<dbReference type="BioGRID" id="202194">
    <property type="interactions" value="29"/>
</dbReference>
<dbReference type="CORUM" id="P20444"/>
<dbReference type="DIP" id="DIP-532N"/>
<dbReference type="FunCoup" id="P20444">
    <property type="interactions" value="1606"/>
</dbReference>
<dbReference type="IntAct" id="P20444">
    <property type="interactions" value="5"/>
</dbReference>
<dbReference type="MINT" id="P20444"/>
<dbReference type="STRING" id="10090.ENSMUSP00000062392"/>
<dbReference type="BindingDB" id="P20444"/>
<dbReference type="ChEMBL" id="CHEMBL2567"/>
<dbReference type="iPTMnet" id="P20444"/>
<dbReference type="PhosphoSitePlus" id="P20444"/>
<dbReference type="SwissPalm" id="P20444"/>
<dbReference type="jPOST" id="P20444"/>
<dbReference type="PaxDb" id="10090-ENSMUSP00000062392"/>
<dbReference type="PeptideAtlas" id="P20444"/>
<dbReference type="ProteomicsDB" id="263674"/>
<dbReference type="Pumba" id="P20444"/>
<dbReference type="DNASU" id="18750"/>
<dbReference type="GeneID" id="18750"/>
<dbReference type="KEGG" id="mmu:18750"/>
<dbReference type="AGR" id="MGI:97595"/>
<dbReference type="CTD" id="5578"/>
<dbReference type="MGI" id="MGI:97595">
    <property type="gene designation" value="Prkca"/>
</dbReference>
<dbReference type="eggNOG" id="KOG0696">
    <property type="taxonomic scope" value="Eukaryota"/>
</dbReference>
<dbReference type="InParanoid" id="P20444"/>
<dbReference type="OrthoDB" id="63267at2759"/>
<dbReference type="PhylomeDB" id="P20444"/>
<dbReference type="BRENDA" id="2.7.11.13">
    <property type="organism ID" value="3474"/>
</dbReference>
<dbReference type="Reactome" id="R-MMU-111933">
    <property type="pathway name" value="Calmodulin induced events"/>
</dbReference>
<dbReference type="Reactome" id="R-MMU-114516">
    <property type="pathway name" value="Disinhibition of SNARE formation"/>
</dbReference>
<dbReference type="Reactome" id="R-MMU-1250196">
    <property type="pathway name" value="SHC1 events in ERBB2 signaling"/>
</dbReference>
<dbReference type="Reactome" id="R-MMU-1433557">
    <property type="pathway name" value="Signaling by SCF-KIT"/>
</dbReference>
<dbReference type="Reactome" id="R-MMU-1433559">
    <property type="pathway name" value="Regulation of KIT signaling"/>
</dbReference>
<dbReference type="Reactome" id="R-MMU-2179392">
    <property type="pathway name" value="EGFR Transactivation by Gastrin"/>
</dbReference>
<dbReference type="Reactome" id="R-MMU-3000170">
    <property type="pathway name" value="Syndecan interactions"/>
</dbReference>
<dbReference type="Reactome" id="R-MMU-399997">
    <property type="pathway name" value="Acetylcholine regulates insulin secretion"/>
</dbReference>
<dbReference type="Reactome" id="R-MMU-416993">
    <property type="pathway name" value="Trafficking of GluR2-containing AMPA receptors"/>
</dbReference>
<dbReference type="Reactome" id="R-MMU-4419969">
    <property type="pathway name" value="Depolymerization of the Nuclear Lamina"/>
</dbReference>
<dbReference type="Reactome" id="R-MMU-450520">
    <property type="pathway name" value="HuR (ELAVL1) binds and stabilizes mRNA"/>
</dbReference>
<dbReference type="Reactome" id="R-MMU-5099900">
    <property type="pathway name" value="WNT5A-dependent internalization of FZD4"/>
</dbReference>
<dbReference type="Reactome" id="R-MMU-5218921">
    <property type="pathway name" value="VEGFR2 mediated cell proliferation"/>
</dbReference>
<dbReference type="Reactome" id="R-MMU-5668599">
    <property type="pathway name" value="RHO GTPases Activate NADPH Oxidases"/>
</dbReference>
<dbReference type="Reactome" id="R-MMU-76005">
    <property type="pathway name" value="Response to elevated platelet cytosolic Ca2+"/>
</dbReference>
<dbReference type="Reactome" id="R-MMU-8853659">
    <property type="pathway name" value="RET signaling"/>
</dbReference>
<dbReference type="BioGRID-ORCS" id="18750">
    <property type="hits" value="2 hits in 84 CRISPR screens"/>
</dbReference>
<dbReference type="ChiTaRS" id="Prkca">
    <property type="organism name" value="mouse"/>
</dbReference>
<dbReference type="PRO" id="PR:P20444"/>
<dbReference type="Proteomes" id="UP000000589">
    <property type="component" value="Unplaced"/>
</dbReference>
<dbReference type="RNAct" id="P20444">
    <property type="molecule type" value="protein"/>
</dbReference>
<dbReference type="GO" id="GO:0035866">
    <property type="term" value="C:alphav-beta3 integrin-PKCalpha complex"/>
    <property type="evidence" value="ECO:0000314"/>
    <property type="project" value="BHF-UCL"/>
</dbReference>
<dbReference type="GO" id="GO:0045177">
    <property type="term" value="C:apical part of cell"/>
    <property type="evidence" value="ECO:0000314"/>
    <property type="project" value="MGI"/>
</dbReference>
<dbReference type="GO" id="GO:0030424">
    <property type="term" value="C:axon"/>
    <property type="evidence" value="ECO:0000314"/>
    <property type="project" value="MGI"/>
</dbReference>
<dbReference type="GO" id="GO:0044305">
    <property type="term" value="C:calyx of Held"/>
    <property type="evidence" value="ECO:0000314"/>
    <property type="project" value="SynGO"/>
</dbReference>
<dbReference type="GO" id="GO:0120199">
    <property type="term" value="C:cone photoreceptor outer segment"/>
    <property type="evidence" value="ECO:0000314"/>
    <property type="project" value="MGI"/>
</dbReference>
<dbReference type="GO" id="GO:0005737">
    <property type="term" value="C:cytoplasm"/>
    <property type="evidence" value="ECO:0000314"/>
    <property type="project" value="MGI"/>
</dbReference>
<dbReference type="GO" id="GO:0005829">
    <property type="term" value="C:cytosol"/>
    <property type="evidence" value="ECO:0000314"/>
    <property type="project" value="UniProt"/>
</dbReference>
<dbReference type="GO" id="GO:0030425">
    <property type="term" value="C:dendrite"/>
    <property type="evidence" value="ECO:0000314"/>
    <property type="project" value="MGI"/>
</dbReference>
<dbReference type="GO" id="GO:0014704">
    <property type="term" value="C:intercalated disc"/>
    <property type="evidence" value="ECO:0000314"/>
    <property type="project" value="MGI"/>
</dbReference>
<dbReference type="GO" id="GO:0016020">
    <property type="term" value="C:membrane"/>
    <property type="evidence" value="ECO:0000314"/>
    <property type="project" value="MGI"/>
</dbReference>
<dbReference type="GO" id="GO:0031966">
    <property type="term" value="C:mitochondrial membrane"/>
    <property type="evidence" value="ECO:0007669"/>
    <property type="project" value="UniProtKB-SubCell"/>
</dbReference>
<dbReference type="GO" id="GO:0005739">
    <property type="term" value="C:mitochondrion"/>
    <property type="evidence" value="ECO:0000314"/>
    <property type="project" value="MGI"/>
</dbReference>
<dbReference type="GO" id="GO:0043025">
    <property type="term" value="C:neuronal cell body"/>
    <property type="evidence" value="ECO:0000314"/>
    <property type="project" value="MGI"/>
</dbReference>
<dbReference type="GO" id="GO:0005634">
    <property type="term" value="C:nucleus"/>
    <property type="evidence" value="ECO:0000314"/>
    <property type="project" value="MGI"/>
</dbReference>
<dbReference type="GO" id="GO:1990917">
    <property type="term" value="C:ooplasm"/>
    <property type="evidence" value="ECO:0000314"/>
    <property type="project" value="MGI"/>
</dbReference>
<dbReference type="GO" id="GO:0048471">
    <property type="term" value="C:perinuclear region of cytoplasm"/>
    <property type="evidence" value="ECO:0000250"/>
    <property type="project" value="UniProtKB"/>
</dbReference>
<dbReference type="GO" id="GO:0005886">
    <property type="term" value="C:plasma membrane"/>
    <property type="evidence" value="ECO:0000314"/>
    <property type="project" value="MGI"/>
</dbReference>
<dbReference type="GO" id="GO:0099523">
    <property type="term" value="C:presynaptic cytosol"/>
    <property type="evidence" value="ECO:0000314"/>
    <property type="project" value="SynGO"/>
</dbReference>
<dbReference type="GO" id="GO:0032991">
    <property type="term" value="C:protein-containing complex"/>
    <property type="evidence" value="ECO:0000314"/>
    <property type="project" value="MGI"/>
</dbReference>
<dbReference type="GO" id="GO:0005524">
    <property type="term" value="F:ATP binding"/>
    <property type="evidence" value="ECO:0007669"/>
    <property type="project" value="UniProtKB-KW"/>
</dbReference>
<dbReference type="GO" id="GO:0004698">
    <property type="term" value="F:calcium,diacylglycerol-dependent serine/threonine kinase activity"/>
    <property type="evidence" value="ECO:0000314"/>
    <property type="project" value="MGI"/>
</dbReference>
<dbReference type="GO" id="GO:0004697">
    <property type="term" value="F:diacylglycerol-dependent serine/threonine kinase activity"/>
    <property type="evidence" value="ECO:0000314"/>
    <property type="project" value="CACAO"/>
</dbReference>
<dbReference type="GO" id="GO:0005178">
    <property type="term" value="F:integrin binding"/>
    <property type="evidence" value="ECO:0000353"/>
    <property type="project" value="BHF-UCL"/>
</dbReference>
<dbReference type="GO" id="GO:0008289">
    <property type="term" value="F:lipid binding"/>
    <property type="evidence" value="ECO:0000269"/>
    <property type="project" value="DisProt"/>
</dbReference>
<dbReference type="GO" id="GO:0106310">
    <property type="term" value="F:protein serine kinase activity"/>
    <property type="evidence" value="ECO:0007669"/>
    <property type="project" value="RHEA"/>
</dbReference>
<dbReference type="GO" id="GO:0004674">
    <property type="term" value="F:protein serine/threonine kinase activity"/>
    <property type="evidence" value="ECO:0000314"/>
    <property type="project" value="MGI"/>
</dbReference>
<dbReference type="GO" id="GO:0008270">
    <property type="term" value="F:zinc ion binding"/>
    <property type="evidence" value="ECO:0007669"/>
    <property type="project" value="UniProtKB-KW"/>
</dbReference>
<dbReference type="GO" id="GO:0001525">
    <property type="term" value="P:angiogenesis"/>
    <property type="evidence" value="ECO:0007669"/>
    <property type="project" value="UniProtKB-KW"/>
</dbReference>
<dbReference type="GO" id="GO:0007155">
    <property type="term" value="P:cell adhesion"/>
    <property type="evidence" value="ECO:0007669"/>
    <property type="project" value="UniProtKB-KW"/>
</dbReference>
<dbReference type="GO" id="GO:0008283">
    <property type="term" value="P:cell population proliferation"/>
    <property type="evidence" value="ECO:0000316"/>
    <property type="project" value="MGI"/>
</dbReference>
<dbReference type="GO" id="GO:0071322">
    <property type="term" value="P:cellular response to carbohydrate stimulus"/>
    <property type="evidence" value="ECO:0000314"/>
    <property type="project" value="MGI"/>
</dbReference>
<dbReference type="GO" id="GO:0002062">
    <property type="term" value="P:chondrocyte differentiation"/>
    <property type="evidence" value="ECO:0000314"/>
    <property type="project" value="MGI"/>
</dbReference>
<dbReference type="GO" id="GO:0050930">
    <property type="term" value="P:induction of positive chemotaxis"/>
    <property type="evidence" value="ECO:0000315"/>
    <property type="project" value="MGI"/>
</dbReference>
<dbReference type="GO" id="GO:0006874">
    <property type="term" value="P:intracellular calcium ion homeostasis"/>
    <property type="evidence" value="ECO:0000315"/>
    <property type="project" value="MGI"/>
</dbReference>
<dbReference type="GO" id="GO:0097193">
    <property type="term" value="P:intrinsic apoptotic signaling pathway"/>
    <property type="evidence" value="ECO:0000315"/>
    <property type="project" value="MGI"/>
</dbReference>
<dbReference type="GO" id="GO:0046716">
    <property type="term" value="P:muscle cell cellular homeostasis"/>
    <property type="evidence" value="ECO:0000315"/>
    <property type="project" value="MGI"/>
</dbReference>
<dbReference type="GO" id="GO:0008285">
    <property type="term" value="P:negative regulation of cell population proliferation"/>
    <property type="evidence" value="ECO:0000316"/>
    <property type="project" value="MGI"/>
</dbReference>
<dbReference type="GO" id="GO:1900016">
    <property type="term" value="P:negative regulation of cytokine production involved in inflammatory response"/>
    <property type="evidence" value="ECO:0000314"/>
    <property type="project" value="UniProt"/>
</dbReference>
<dbReference type="GO" id="GO:0046325">
    <property type="term" value="P:negative regulation of D-glucose import"/>
    <property type="evidence" value="ECO:0000315"/>
    <property type="project" value="MGI"/>
</dbReference>
<dbReference type="GO" id="GO:0034351">
    <property type="term" value="P:negative regulation of glial cell apoptotic process"/>
    <property type="evidence" value="ECO:0000250"/>
    <property type="project" value="UniProtKB"/>
</dbReference>
<dbReference type="GO" id="GO:0046627">
    <property type="term" value="P:negative regulation of insulin receptor signaling pathway"/>
    <property type="evidence" value="ECO:0000315"/>
    <property type="project" value="MGI"/>
</dbReference>
<dbReference type="GO" id="GO:0043409">
    <property type="term" value="P:negative regulation of MAPK cascade"/>
    <property type="evidence" value="ECO:0000315"/>
    <property type="project" value="MGI"/>
</dbReference>
<dbReference type="GO" id="GO:0030593">
    <property type="term" value="P:neutrophil chemotaxis"/>
    <property type="evidence" value="ECO:0000315"/>
    <property type="project" value="MGI"/>
</dbReference>
<dbReference type="GO" id="GO:0045766">
    <property type="term" value="P:positive regulation of angiogenesis"/>
    <property type="evidence" value="ECO:0000250"/>
    <property type="project" value="UniProtKB"/>
</dbReference>
<dbReference type="GO" id="GO:0045780">
    <property type="term" value="P:positive regulation of bone resorption"/>
    <property type="evidence" value="ECO:0000315"/>
    <property type="project" value="BHF-UCL"/>
</dbReference>
<dbReference type="GO" id="GO:0010613">
    <property type="term" value="P:positive regulation of cardiac muscle hypertrophy"/>
    <property type="evidence" value="ECO:0000250"/>
    <property type="project" value="UniProtKB"/>
</dbReference>
<dbReference type="GO" id="GO:0045785">
    <property type="term" value="P:positive regulation of cell adhesion"/>
    <property type="evidence" value="ECO:0000250"/>
    <property type="project" value="UniProtKB"/>
</dbReference>
<dbReference type="GO" id="GO:0030335">
    <property type="term" value="P:positive regulation of cell migration"/>
    <property type="evidence" value="ECO:0000250"/>
    <property type="project" value="UniProtKB"/>
</dbReference>
<dbReference type="GO" id="GO:2000707">
    <property type="term" value="P:positive regulation of dense core granule biogenesis"/>
    <property type="evidence" value="ECO:0000315"/>
    <property type="project" value="UniProtKB"/>
</dbReference>
<dbReference type="GO" id="GO:0010595">
    <property type="term" value="P:positive regulation of endothelial cell migration"/>
    <property type="evidence" value="ECO:0000250"/>
    <property type="project" value="UniProtKB"/>
</dbReference>
<dbReference type="GO" id="GO:0001938">
    <property type="term" value="P:positive regulation of endothelial cell proliferation"/>
    <property type="evidence" value="ECO:0000250"/>
    <property type="project" value="UniProtKB"/>
</dbReference>
<dbReference type="GO" id="GO:0070374">
    <property type="term" value="P:positive regulation of ERK1 and ERK2 cascade"/>
    <property type="evidence" value="ECO:0000250"/>
    <property type="project" value="UniProtKB"/>
</dbReference>
<dbReference type="GO" id="GO:0050729">
    <property type="term" value="P:positive regulation of inflammatory response"/>
    <property type="evidence" value="ECO:0000315"/>
    <property type="project" value="MGI"/>
</dbReference>
<dbReference type="GO" id="GO:0031666">
    <property type="term" value="P:positive regulation of lipopolysaccharide-mediated signaling pathway"/>
    <property type="evidence" value="ECO:0000250"/>
    <property type="project" value="UniProtKB"/>
</dbReference>
<dbReference type="GO" id="GO:0045651">
    <property type="term" value="P:positive regulation of macrophage differentiation"/>
    <property type="evidence" value="ECO:0000315"/>
    <property type="project" value="UniProtKB"/>
</dbReference>
<dbReference type="GO" id="GO:0045931">
    <property type="term" value="P:positive regulation of mitotic cell cycle"/>
    <property type="evidence" value="ECO:0000250"/>
    <property type="project" value="UniProtKB"/>
</dbReference>
<dbReference type="GO" id="GO:0051897">
    <property type="term" value="P:positive regulation of phosphatidylinositol 3-kinase/protein kinase B signal transduction"/>
    <property type="evidence" value="ECO:0000314"/>
    <property type="project" value="UniProt"/>
</dbReference>
<dbReference type="GO" id="GO:0099171">
    <property type="term" value="P:presynaptic modulation of chemical synaptic transmission"/>
    <property type="evidence" value="ECO:0000314"/>
    <property type="project" value="SynGO"/>
</dbReference>
<dbReference type="GO" id="GO:0006468">
    <property type="term" value="P:protein phosphorylation"/>
    <property type="evidence" value="ECO:0000314"/>
    <property type="project" value="UniProtKB"/>
</dbReference>
<dbReference type="GO" id="GO:0006937">
    <property type="term" value="P:regulation of muscle contraction"/>
    <property type="evidence" value="ECO:0000315"/>
    <property type="project" value="MGI"/>
</dbReference>
<dbReference type="GO" id="GO:0090330">
    <property type="term" value="P:regulation of platelet aggregation"/>
    <property type="evidence" value="ECO:0000315"/>
    <property type="project" value="UniProtKB"/>
</dbReference>
<dbReference type="GO" id="GO:2000300">
    <property type="term" value="P:regulation of synaptic vesicle exocytosis"/>
    <property type="evidence" value="ECO:0000314"/>
    <property type="project" value="SynGO"/>
</dbReference>
<dbReference type="GO" id="GO:0002026">
    <property type="term" value="P:regulation of the force of heart contraction"/>
    <property type="evidence" value="ECO:0000315"/>
    <property type="project" value="MGI"/>
</dbReference>
<dbReference type="GO" id="GO:0048863">
    <property type="term" value="P:stem cell differentiation"/>
    <property type="evidence" value="ECO:0000314"/>
    <property type="project" value="MGI"/>
</dbReference>
<dbReference type="CDD" id="cd20833">
    <property type="entry name" value="C1_cPKC_rpt1"/>
    <property type="match status" value="1"/>
</dbReference>
<dbReference type="CDD" id="cd20836">
    <property type="entry name" value="C1_cPKC_rpt2"/>
    <property type="match status" value="1"/>
</dbReference>
<dbReference type="CDD" id="cd04026">
    <property type="entry name" value="C2_PKC_alpha_gamma"/>
    <property type="match status" value="1"/>
</dbReference>
<dbReference type="CDD" id="cd05615">
    <property type="entry name" value="STKc_cPKC_alpha"/>
    <property type="match status" value="1"/>
</dbReference>
<dbReference type="DisProt" id="DP01105"/>
<dbReference type="FunFam" id="2.60.40.150:FF:000012">
    <property type="entry name" value="Kinase C alpha type"/>
    <property type="match status" value="1"/>
</dbReference>
<dbReference type="FunFam" id="1.10.510.10:FF:000023">
    <property type="entry name" value="Protein kinase C"/>
    <property type="match status" value="1"/>
</dbReference>
<dbReference type="FunFam" id="3.30.200.20:FF:000080">
    <property type="entry name" value="Protein kinase C"/>
    <property type="match status" value="1"/>
</dbReference>
<dbReference type="FunFam" id="3.30.200.20:FF:000103">
    <property type="entry name" value="Protein kinase C"/>
    <property type="match status" value="1"/>
</dbReference>
<dbReference type="FunFam" id="3.30.60.20:FF:000006">
    <property type="entry name" value="Protein kinase C"/>
    <property type="match status" value="1"/>
</dbReference>
<dbReference type="FunFam" id="3.30.60.20:FF:000031">
    <property type="entry name" value="Protein kinase C alpha"/>
    <property type="match status" value="1"/>
</dbReference>
<dbReference type="Gene3D" id="3.30.60.20">
    <property type="match status" value="2"/>
</dbReference>
<dbReference type="Gene3D" id="2.60.40.150">
    <property type="entry name" value="C2 domain"/>
    <property type="match status" value="1"/>
</dbReference>
<dbReference type="Gene3D" id="3.30.200.20">
    <property type="entry name" value="Phosphorylase Kinase, domain 1"/>
    <property type="match status" value="2"/>
</dbReference>
<dbReference type="Gene3D" id="1.10.510.10">
    <property type="entry name" value="Transferase(Phosphotransferase) domain 1"/>
    <property type="match status" value="1"/>
</dbReference>
<dbReference type="InterPro" id="IPR000961">
    <property type="entry name" value="AGC-kinase_C"/>
</dbReference>
<dbReference type="InterPro" id="IPR046349">
    <property type="entry name" value="C1-like_sf"/>
</dbReference>
<dbReference type="InterPro" id="IPR000008">
    <property type="entry name" value="C2_dom"/>
</dbReference>
<dbReference type="InterPro" id="IPR035892">
    <property type="entry name" value="C2_domain_sf"/>
</dbReference>
<dbReference type="InterPro" id="IPR034663">
    <property type="entry name" value="cPKC_alpha"/>
</dbReference>
<dbReference type="InterPro" id="IPR020454">
    <property type="entry name" value="DAG/PE-bd"/>
</dbReference>
<dbReference type="InterPro" id="IPR011009">
    <property type="entry name" value="Kinase-like_dom_sf"/>
</dbReference>
<dbReference type="InterPro" id="IPR002219">
    <property type="entry name" value="PE/DAG-bd"/>
</dbReference>
<dbReference type="InterPro" id="IPR017892">
    <property type="entry name" value="Pkinase_C"/>
</dbReference>
<dbReference type="InterPro" id="IPR000719">
    <property type="entry name" value="Prot_kinase_dom"/>
</dbReference>
<dbReference type="InterPro" id="IPR017441">
    <property type="entry name" value="Protein_kinase_ATP_BS"/>
</dbReference>
<dbReference type="InterPro" id="IPR014375">
    <property type="entry name" value="Protein_kinase_C_a/b/g"/>
</dbReference>
<dbReference type="InterPro" id="IPR008271">
    <property type="entry name" value="Ser/Thr_kinase_AS"/>
</dbReference>
<dbReference type="PANTHER" id="PTHR24351">
    <property type="entry name" value="RIBOSOMAL PROTEIN S6 KINASE"/>
    <property type="match status" value="1"/>
</dbReference>
<dbReference type="Pfam" id="PF00130">
    <property type="entry name" value="C1_1"/>
    <property type="match status" value="2"/>
</dbReference>
<dbReference type="Pfam" id="PF00168">
    <property type="entry name" value="C2"/>
    <property type="match status" value="1"/>
</dbReference>
<dbReference type="Pfam" id="PF00069">
    <property type="entry name" value="Pkinase"/>
    <property type="match status" value="1"/>
</dbReference>
<dbReference type="Pfam" id="PF00433">
    <property type="entry name" value="Pkinase_C"/>
    <property type="match status" value="1"/>
</dbReference>
<dbReference type="PIRSF" id="PIRSF000550">
    <property type="entry name" value="PKC_alpha"/>
    <property type="match status" value="1"/>
</dbReference>
<dbReference type="PRINTS" id="PR00360">
    <property type="entry name" value="C2DOMAIN"/>
</dbReference>
<dbReference type="PRINTS" id="PR00008">
    <property type="entry name" value="DAGPEDOMAIN"/>
</dbReference>
<dbReference type="SMART" id="SM00109">
    <property type="entry name" value="C1"/>
    <property type="match status" value="2"/>
</dbReference>
<dbReference type="SMART" id="SM00239">
    <property type="entry name" value="C2"/>
    <property type="match status" value="1"/>
</dbReference>
<dbReference type="SMART" id="SM00133">
    <property type="entry name" value="S_TK_X"/>
    <property type="match status" value="1"/>
</dbReference>
<dbReference type="SMART" id="SM00220">
    <property type="entry name" value="S_TKc"/>
    <property type="match status" value="1"/>
</dbReference>
<dbReference type="SUPFAM" id="SSF49562">
    <property type="entry name" value="C2 domain (Calcium/lipid-binding domain, CaLB)"/>
    <property type="match status" value="1"/>
</dbReference>
<dbReference type="SUPFAM" id="SSF57889">
    <property type="entry name" value="Cysteine-rich domain"/>
    <property type="match status" value="2"/>
</dbReference>
<dbReference type="SUPFAM" id="SSF56112">
    <property type="entry name" value="Protein kinase-like (PK-like)"/>
    <property type="match status" value="1"/>
</dbReference>
<dbReference type="PROSITE" id="PS51285">
    <property type="entry name" value="AGC_KINASE_CTER"/>
    <property type="match status" value="1"/>
</dbReference>
<dbReference type="PROSITE" id="PS50004">
    <property type="entry name" value="C2"/>
    <property type="match status" value="1"/>
</dbReference>
<dbReference type="PROSITE" id="PS00107">
    <property type="entry name" value="PROTEIN_KINASE_ATP"/>
    <property type="match status" value="1"/>
</dbReference>
<dbReference type="PROSITE" id="PS50011">
    <property type="entry name" value="PROTEIN_KINASE_DOM"/>
    <property type="match status" value="1"/>
</dbReference>
<dbReference type="PROSITE" id="PS00108">
    <property type="entry name" value="PROTEIN_KINASE_ST"/>
    <property type="match status" value="1"/>
</dbReference>
<dbReference type="PROSITE" id="PS00479">
    <property type="entry name" value="ZF_DAG_PE_1"/>
    <property type="match status" value="2"/>
</dbReference>
<dbReference type="PROSITE" id="PS50081">
    <property type="entry name" value="ZF_DAG_PE_2"/>
    <property type="match status" value="2"/>
</dbReference>
<accession>P20444</accession>
<name>KPCA_MOUSE</name>
<evidence type="ECO:0000250" key="1">
    <source>
        <dbReference type="UniProtKB" id="P04409"/>
    </source>
</evidence>
<evidence type="ECO:0000250" key="2">
    <source>
        <dbReference type="UniProtKB" id="P05696"/>
    </source>
</evidence>
<evidence type="ECO:0000250" key="3">
    <source>
        <dbReference type="UniProtKB" id="P05771"/>
    </source>
</evidence>
<evidence type="ECO:0000250" key="4">
    <source>
        <dbReference type="UniProtKB" id="P17252"/>
    </source>
</evidence>
<evidence type="ECO:0000255" key="5">
    <source>
        <dbReference type="PROSITE-ProRule" id="PRU00041"/>
    </source>
</evidence>
<evidence type="ECO:0000255" key="6">
    <source>
        <dbReference type="PROSITE-ProRule" id="PRU00159"/>
    </source>
</evidence>
<evidence type="ECO:0000255" key="7">
    <source>
        <dbReference type="PROSITE-ProRule" id="PRU00226"/>
    </source>
</evidence>
<evidence type="ECO:0000255" key="8">
    <source>
        <dbReference type="PROSITE-ProRule" id="PRU00618"/>
    </source>
</evidence>
<evidence type="ECO:0000255" key="9">
    <source>
        <dbReference type="PROSITE-ProRule" id="PRU10027"/>
    </source>
</evidence>
<evidence type="ECO:0000269" key="10">
    <source>
    </source>
</evidence>
<evidence type="ECO:0000269" key="11">
    <source>
    </source>
</evidence>
<evidence type="ECO:0000269" key="12">
    <source>
    </source>
</evidence>
<evidence type="ECO:0000269" key="13">
    <source>
    </source>
</evidence>
<evidence type="ECO:0000269" key="14">
    <source>
    </source>
</evidence>
<evidence type="ECO:0000269" key="15">
    <source>
    </source>
</evidence>
<evidence type="ECO:0000269" key="16">
    <source>
    </source>
</evidence>
<evidence type="ECO:0000269" key="17">
    <source>
    </source>
</evidence>
<evidence type="ECO:0000269" key="18">
    <source>
    </source>
</evidence>
<evidence type="ECO:0000269" key="19">
    <source>
    </source>
</evidence>
<evidence type="ECO:0000269" key="20">
    <source>
    </source>
</evidence>
<evidence type="ECO:0000305" key="21"/>
<evidence type="ECO:0000305" key="22">
    <source>
    </source>
</evidence>
<organism>
    <name type="scientific">Mus musculus</name>
    <name type="common">Mouse</name>
    <dbReference type="NCBI Taxonomy" id="10090"/>
    <lineage>
        <taxon>Eukaryota</taxon>
        <taxon>Metazoa</taxon>
        <taxon>Chordata</taxon>
        <taxon>Craniata</taxon>
        <taxon>Vertebrata</taxon>
        <taxon>Euteleostomi</taxon>
        <taxon>Mammalia</taxon>
        <taxon>Eutheria</taxon>
        <taxon>Euarchontoglires</taxon>
        <taxon>Glires</taxon>
        <taxon>Rodentia</taxon>
        <taxon>Myomorpha</taxon>
        <taxon>Muroidea</taxon>
        <taxon>Muridae</taxon>
        <taxon>Murinae</taxon>
        <taxon>Mus</taxon>
        <taxon>Mus</taxon>
    </lineage>
</organism>
<comment type="function">
    <text evidence="4 13 16 19 20">Calcium-activated, phospholipid- and diacylglycerol (DAG)-dependent serine/threonine-protein kinase that is involved in positive and negative regulation of cell proliferation, apoptosis, differentiation, migration and adhesion, cardiac hypertrophy, angiogenesis, platelet function and inflammation, by directly phosphorylating targets such as RAF1, BCL2, CSPG4, TNNT2/CTNT, or activating signaling cascades involving MAPK1/3 (ERK1/2) and RAP1GAP. Depending on the cell type, is involved in cell proliferation and cell growth arrest by positive and negative regulation of the cell cycle. Can promote cell growth by phosphorylating and activating RAF1, which mediates the activation of the MAPK/ERK signaling cascade, and/or by up-regulating CDKN1A, which facilitates active cyclin-dependent kinase (CDK) complex formation. In cells stimulated by the phorbol ester PMA, can trigger a cell cycle arrest program which is associated with the accumulation of the hyper-phosphorylated growth-suppressive form of RB1 and induction of the CDK inhibitors CDKN1A and CDKN1B. Depending on the cell type, exhibits anti-apoptotic function and protects cells from apoptosis by suppressing the p53/TP53-mediated activation of IGFBP3, or mediates anti-apoptotic action by phosphorylating BCL2. During macrophage differentiation induced by macrophage colony-stimulating factor (CSF1), is translocated to the nucleus and is associated with macrophage development. After wounding, translocates from focal contacts to lamellipodia and participates in the modulation of desmosomal adhesion. Plays a role in cell motility by phosphorylating CSPG4, which induces association of CSPG4 with extensive lamellipodia at the cell periphery and polarization of the cell accompanied by increases in cell motility. During chemokine-induced CD4(+) T cell migration, phosphorylates CDC42-guanine exchange factor DOCK8 resulting in its dissociation from LRCH1 and the activation of GTPase CDC42 (By similarity). Negatively regulates myocardial contractility and positively regulates angiogenesis, platelet aggregation and thrombus formation in arteries. Mediates hypertrophic growth of neonatal cardiomyocytes, in part through a MAPK1/3 (ERK1/2)-dependent signaling pathway, and upon PMA treatment, is required to induce cardiomyocyte hypertrophy up to heart failure and death, by increasing protein synthesis, protein-DNA ratio and cell surface area. Regulates cardiomyocyte function by phosphorylating cardiac troponin T (TNNT2/CTNT), which induces significant reduction in actomyosin ATPase activity, myofilament calcium sensitivity and myocardial contractility. In angiogenesis, is required for full endothelial cell migration, adhesion to vitronectin (VTN), and vascular endothelial growth factor A (VEGFA)-dependent regulation of kinase activation and vascular tube formation. Involved in the stabilization of VEGFA mRNA at post-transcriptional level and mediates VEGFA-induced cell proliferation. In the regulation of calcium-induced platelet aggregation, mediates signals from the CD36/GP4 receptor for granule release, and activates the integrin heterodimer ITGA2B-ITGB3 through the RAP1GAP pathway for adhesion. During response to lipopolysaccharides (LPS), may regulate selective LPS-induced macrophage functions involved in host defense and inflammation. But in some inflammatory responses, may negatively regulate NF-kappa-B-induced genes, through IL1A-dependent induction of NF-kappa-B inhibitor alpha (NFKBIA/IKBA). Upon stimulation with 12-O-tetradecanoylphorbol-13-acetate (TPA), phosphorylates EIF4G1, which modulates EIF4G1 binding to MKNK1 and may be involved in the regulation of EIF4E phosphorylation. Phosphorylates KIT, leading to inhibition of KIT activity. Phosphorylates ATF2 which promotes cooperation between ATF2 and JUN, activating transcription. Phosphorylates SOCS2 at 'Ser-52' facilitating its ubiquitination and proteasomal degradation (PubMed:31578312). Phosphorylates KLHL3 in response to angiotensin II signaling, decreasing the interaction between KLHL3 and WNK4 (By similarity). Phosphorylates and activates LRRK1, which phosphorylates RAB proteins involved in intracellular trafficking (By similarity).</text>
</comment>
<comment type="catalytic activity">
    <reaction evidence="4">
        <text>L-seryl-[protein] + ATP = O-phospho-L-seryl-[protein] + ADP + H(+)</text>
        <dbReference type="Rhea" id="RHEA:17989"/>
        <dbReference type="Rhea" id="RHEA-COMP:9863"/>
        <dbReference type="Rhea" id="RHEA-COMP:11604"/>
        <dbReference type="ChEBI" id="CHEBI:15378"/>
        <dbReference type="ChEBI" id="CHEBI:29999"/>
        <dbReference type="ChEBI" id="CHEBI:30616"/>
        <dbReference type="ChEBI" id="CHEBI:83421"/>
        <dbReference type="ChEBI" id="CHEBI:456216"/>
        <dbReference type="EC" id="2.7.11.13"/>
    </reaction>
</comment>
<comment type="catalytic activity">
    <reaction evidence="4">
        <text>L-threonyl-[protein] + ATP = O-phospho-L-threonyl-[protein] + ADP + H(+)</text>
        <dbReference type="Rhea" id="RHEA:46608"/>
        <dbReference type="Rhea" id="RHEA-COMP:11060"/>
        <dbReference type="Rhea" id="RHEA-COMP:11605"/>
        <dbReference type="ChEBI" id="CHEBI:15378"/>
        <dbReference type="ChEBI" id="CHEBI:30013"/>
        <dbReference type="ChEBI" id="CHEBI:30616"/>
        <dbReference type="ChEBI" id="CHEBI:61977"/>
        <dbReference type="ChEBI" id="CHEBI:456216"/>
        <dbReference type="EC" id="2.7.11.13"/>
    </reaction>
</comment>
<comment type="cofactor">
    <cofactor evidence="5">
        <name>Ca(2+)</name>
        <dbReference type="ChEBI" id="CHEBI:29108"/>
    </cofactor>
    <text evidence="2">Binds 3 Ca(2+) ions per subunit. The ions are bound to the C2 domain.</text>
</comment>
<comment type="activity regulation">
    <text>Classical (or conventional) PKCs (PRKCA, PRKCB and PRKCG) are activated by calcium and diacylglycerol (DAG) in the presence of phosphatidylserine. Three specific sites; Thr-497 (activation loop of the kinase domain), Thr-638 (turn motif) and Ser-657 (hydrophobic region), need to be phosphorylated for its full activation.</text>
</comment>
<comment type="subunit">
    <text evidence="2 4 14 16 18">Interacts with ADAP1/CENTA1 and CSPG4 (By similarity). Interacts with PRKCABP (PubMed:7844141). Binds to CAVIN2 in the presence of phosphatidylserine. Interacts with PICK1 (via PDZ domain). Interacts with TRIM41 (By similarity). Recruited in a circadian manner into a nuclear complex which also includes BMAL1 and RACK1 (PubMed:20093473). Interacts with PARD3 (By similarity). Interacts with SOCS2 (PubMed:31578312).</text>
</comment>
<comment type="interaction">
    <interactant intactId="EBI-6976815">
        <id>P20444</id>
    </interactant>
    <interactant intactId="EBI-79859">
        <id>O08785</id>
        <label>Clock</label>
    </interactant>
    <organismsDiffer>false</organismsDiffer>
    <experiments>3</experiments>
</comment>
<comment type="subcellular location">
    <subcellularLocation>
        <location evidence="10 14">Cytoplasm</location>
    </subcellularLocation>
    <subcellularLocation>
        <location evidence="10">Cell membrane</location>
        <topology evidence="22">Peripheral membrane protein</topology>
    </subcellularLocation>
    <subcellularLocation>
        <location evidence="4">Mitochondrion membrane</location>
        <topology evidence="4">Peripheral membrane protein</topology>
    </subcellularLocation>
    <subcellularLocation>
        <location evidence="14">Nucleus</location>
    </subcellularLocation>
    <text>Translocated to the cell periphery upon tetradecanoyl phorbol acetate (TPA) treatment.</text>
</comment>
<comment type="PTM">
    <text evidence="12">In response to growth factors, phosphorylated at Thr-631 and Ser-657 by the mTORC2 complex, promoting autophosphorylation and activation of PRKCA.</text>
</comment>
<comment type="disease">
    <text>Expression of the mutant form UV25 causes malignant transformation of cells.</text>
</comment>
<comment type="similarity">
    <text evidence="21">Belongs to the protein kinase superfamily. AGC Ser/Thr protein kinase family. PKC subfamily.</text>
</comment>
<reference key="1">
    <citation type="journal article" date="1988" name="Gene">
        <title>Molecular cloning of mouse protein kinase C (PKC) cDNA from Swiss 3T3 fibroblasts.</title>
        <authorList>
            <person name="Rose-John S."/>
            <person name="Dietrich A."/>
            <person name="Marks F."/>
        </authorList>
    </citation>
    <scope>NUCLEOTIDE SEQUENCE [MRNA]</scope>
</reference>
<reference key="2">
    <citation type="journal article" date="1989" name="Nature">
        <title>A mutant protein kinase C that can transform fibroblasts.</title>
        <authorList>
            <person name="Megidish T."/>
            <person name="Mazurek N."/>
        </authorList>
    </citation>
    <scope>NUCLEOTIDE SEQUENCE [MRNA]</scope>
    <scope>VARIANTS VAL-106; GLY-111; GLN-240 AND LEU-339</scope>
    <source>
        <strain>BALB/cJ</strain>
        <tissue>Brain</tissue>
    </source>
</reference>
<reference key="3">
    <citation type="journal article" date="1993" name="Nature">
        <title>Protein kinase C alpha activates RAF-1 by direct phosphorylation.</title>
        <authorList>
            <person name="Kolch W."/>
            <person name="Heidecker G."/>
            <person name="Kochs G."/>
            <person name="Hummel R."/>
            <person name="Vahidi H."/>
            <person name="Mischak H."/>
            <person name="Finkenzeller G."/>
            <person name="Marme D."/>
            <person name="Rapp U.R."/>
        </authorList>
    </citation>
    <scope>FUNCTION IN PHOSPHORYLATION OF RAF1</scope>
</reference>
<reference key="4">
    <citation type="journal article" date="1995" name="J. Cell Biol.">
        <title>PICK1: a perinuclear binding protein and substrate for protein kinase C isolated by the yeast two-hybrid system.</title>
        <authorList>
            <person name="Staudinger J."/>
            <person name="Zhou J."/>
            <person name="Burgess R."/>
            <person name="Elledge S.J."/>
            <person name="Olson E.N."/>
        </authorList>
    </citation>
    <scope>INTERACTION WITH PRKCABP</scope>
</reference>
<reference key="5">
    <citation type="journal article" date="1998" name="J. Cell Biol.">
        <title>An activated protein kinase C alpha gives a differentiation signal for hematopoietic progenitor cells and mimicks macrophage colony-stimulating factor-stimulated signaling events.</title>
        <authorList>
            <person name="Pierce A."/>
            <person name="Heyworth C.M."/>
            <person name="Nicholls S.E."/>
            <person name="Spooncer E."/>
            <person name="Dexter T.M."/>
            <person name="Lord J.M."/>
            <person name="Owen-Lynch P.J."/>
            <person name="Wark G."/>
            <person name="Whetton A.D."/>
        </authorList>
    </citation>
    <scope>FUNCTION IN CELL PROLIFERATION</scope>
</reference>
<reference key="6">
    <citation type="journal article" date="1999" name="Science">
        <title>Imaging protein kinase Calpha activation in cells.</title>
        <authorList>
            <person name="Ng T."/>
            <person name="Squire A."/>
            <person name="Hansra G."/>
            <person name="Bornancin F."/>
            <person name="Prevostel C."/>
            <person name="Hanby A."/>
            <person name="Harris W."/>
            <person name="Barnes D."/>
            <person name="Schmidt S."/>
            <person name="Mellor H."/>
            <person name="Bastiaens P.I."/>
            <person name="Parker P.J."/>
        </authorList>
    </citation>
    <scope>SUBCELLULAR LOCATION</scope>
</reference>
<reference key="7">
    <citation type="journal article" date="2003" name="Proc. Natl. Acad. Sci. U.S.A.">
        <title>A Ras activation pathway dependent on Syk phosphorylation of protein kinase C.</title>
        <authorList>
            <person name="Kawakami Y."/>
            <person name="Kitaura J."/>
            <person name="Yao L."/>
            <person name="McHenry R.W."/>
            <person name="Kawakami Y."/>
            <person name="Newton A.C."/>
            <person name="Kang S."/>
            <person name="Kato R.M."/>
            <person name="Leitges M."/>
            <person name="Rawlings D.J."/>
            <person name="Kawakami T."/>
        </authorList>
    </citation>
    <scope>PHOSPHORYLATION AT TYR-658</scope>
</reference>
<reference key="8">
    <citation type="journal article" date="2008" name="EMBO J.">
        <title>Essential function of TORC2 in PKC and Akt turn motif phosphorylation, maturation and signalling.</title>
        <authorList>
            <person name="Ikenoue T."/>
            <person name="Inoki K."/>
            <person name="Yang Q."/>
            <person name="Zhou X."/>
            <person name="Guan K.L."/>
        </authorList>
    </citation>
    <scope>PHOSPHORYLATION AT THR-638 AND SER-657</scope>
    <scope>MUTAGENESIS OF SER-657</scope>
</reference>
<reference key="9">
    <citation type="journal article" date="2009" name="J. Clin. Invest.">
        <title>PKCalpha regulates platelet granule secretion and thrombus formation in mice.</title>
        <authorList>
            <person name="Konopatskaya O."/>
            <person name="Gilio K."/>
            <person name="Harper M.T."/>
            <person name="Zhao Y."/>
            <person name="Cosemans J.M."/>
            <person name="Karim Z.A."/>
            <person name="Whiteheart S.W."/>
            <person name="Molkentin J.D."/>
            <person name="Verkade P."/>
            <person name="Watson S.P."/>
            <person name="Heemskerk J.W."/>
            <person name="Poole A.W."/>
        </authorList>
    </citation>
    <scope>FUNCTION IN PLATELET GRANULE SECRETION</scope>
</reference>
<reference key="10">
    <citation type="journal article" date="2010" name="Cell">
        <title>A tissue-specific atlas of mouse protein phosphorylation and expression.</title>
        <authorList>
            <person name="Huttlin E.L."/>
            <person name="Jedrychowski M.P."/>
            <person name="Elias J.E."/>
            <person name="Goswami T."/>
            <person name="Rad R."/>
            <person name="Beausoleil S.A."/>
            <person name="Villen J."/>
            <person name="Haas W."/>
            <person name="Sowa M.E."/>
            <person name="Gygi S.P."/>
        </authorList>
    </citation>
    <scope>IDENTIFICATION BY MASS SPECTROMETRY [LARGE SCALE ANALYSIS]</scope>
    <source>
        <tissue>Brain</tissue>
        <tissue>Brown adipose tissue</tissue>
        <tissue>Liver</tissue>
        <tissue>Lung</tissue>
        <tissue>Pancreas</tissue>
        <tissue>Spleen</tissue>
        <tissue>Testis</tissue>
    </source>
</reference>
<reference key="11">
    <citation type="journal article" date="2010" name="Science">
        <title>Identification of RACK1 and protein kinase Calpha as integral components of the mammalian circadian clock.</title>
        <authorList>
            <person name="Robles M.S."/>
            <person name="Boyault C."/>
            <person name="Knutti D."/>
            <person name="Padmanabhan K."/>
            <person name="Weitz C.J."/>
        </authorList>
    </citation>
    <scope>INTERACTION WITH BMAL1 AND RACK1</scope>
    <scope>SUBCELLULAR LOCATION</scope>
</reference>
<reference key="12">
    <citation type="journal article" date="2019" name="JCI Insight">
        <title>KIAA0317 regulates pulmonary inflammation through SOCS2 degradation.</title>
        <authorList>
            <person name="Lear T.B."/>
            <person name="McKelvey A.C."/>
            <person name="Evankovich J.W."/>
            <person name="Rajbhandari S."/>
            <person name="Coon T.A."/>
            <person name="Dunn S.R."/>
            <person name="Londino J.D."/>
            <person name="McVerry B.J."/>
            <person name="Zhang Y."/>
            <person name="Valenzi E."/>
            <person name="Burton C.L."/>
            <person name="Gordon R."/>
            <person name="Gingras S."/>
            <person name="Lockwood K.C."/>
            <person name="Jurczak M.J."/>
            <person name="Lafyatis R."/>
            <person name="Shlomchik M.J."/>
            <person name="Liu Y."/>
            <person name="Chen B.B."/>
        </authorList>
    </citation>
    <scope>FUNCTION</scope>
    <scope>INTERACTION WITH SOSC2</scope>
</reference>
<reference key="13">
    <citation type="journal article" date="2021" name="Sci. Signal.">
        <title>mTORC2 controls the activity of PKC and Akt by phosphorylating a conserved TOR interaction motif.</title>
        <authorList>
            <person name="Baffi T.R."/>
            <person name="Lorden G."/>
            <person name="Wozniak J.M."/>
            <person name="Feichtner A."/>
            <person name="Yeung W."/>
            <person name="Kornev A.P."/>
            <person name="King C.C."/>
            <person name="Del Rio J.C."/>
            <person name="Limaye A.J."/>
            <person name="Bogomolovas J."/>
            <person name="Gould C.M."/>
            <person name="Chen J."/>
            <person name="Kennedy E.J."/>
            <person name="Kannan N."/>
            <person name="Gonzalez D.J."/>
            <person name="Stefan E."/>
            <person name="Taylor S.S."/>
            <person name="Newton A.C."/>
        </authorList>
    </citation>
    <scope>PHOSPHORYLATION AT THR-631</scope>
</reference>
<feature type="initiator methionine" description="Removed" evidence="4">
    <location>
        <position position="1"/>
    </location>
</feature>
<feature type="chain" id="PRO_0000055680" description="Protein kinase C alpha type">
    <location>
        <begin position="2"/>
        <end position="672"/>
    </location>
</feature>
<feature type="domain" description="C2" evidence="5">
    <location>
        <begin position="158"/>
        <end position="275"/>
    </location>
</feature>
<feature type="domain" description="Protein kinase" evidence="6">
    <location>
        <begin position="339"/>
        <end position="597"/>
    </location>
</feature>
<feature type="domain" description="AGC-kinase C-terminal" evidence="8">
    <location>
        <begin position="598"/>
        <end position="668"/>
    </location>
</feature>
<feature type="zinc finger region" description="Phorbol-ester/DAG-type 1" evidence="7">
    <location>
        <begin position="36"/>
        <end position="86"/>
    </location>
</feature>
<feature type="zinc finger region" description="Phorbol-ester/DAG-type 2" evidence="7">
    <location>
        <begin position="101"/>
        <end position="151"/>
    </location>
</feature>
<feature type="active site" description="Proton acceptor" evidence="6 9">
    <location>
        <position position="463"/>
    </location>
</feature>
<feature type="binding site" evidence="2">
    <location>
        <position position="186"/>
    </location>
    <ligand>
        <name>Ca(2+)</name>
        <dbReference type="ChEBI" id="CHEBI:29108"/>
        <label>1</label>
    </ligand>
</feature>
<feature type="binding site" evidence="2">
    <location>
        <position position="187"/>
    </location>
    <ligand>
        <name>Ca(2+)</name>
        <dbReference type="ChEBI" id="CHEBI:29108"/>
        <label>1</label>
    </ligand>
</feature>
<feature type="binding site" evidence="2">
    <location>
        <position position="187"/>
    </location>
    <ligand>
        <name>Ca(2+)</name>
        <dbReference type="ChEBI" id="CHEBI:29108"/>
        <label>2</label>
    </ligand>
</feature>
<feature type="binding site" evidence="2">
    <location>
        <position position="193"/>
    </location>
    <ligand>
        <name>Ca(2+)</name>
        <dbReference type="ChEBI" id="CHEBI:29108"/>
        <label>2</label>
    </ligand>
</feature>
<feature type="binding site" evidence="2">
    <location>
        <position position="195"/>
    </location>
    <ligand>
        <name>a 1,2-diacyl-sn-glycero-3-phospho-(1D-myo-inositol-4,5-bisphosphate)</name>
        <dbReference type="ChEBI" id="CHEBI:58456"/>
    </ligand>
</feature>
<feature type="binding site" evidence="2">
    <location>
        <position position="245"/>
    </location>
    <ligand>
        <name>a 1,2-diacyl-sn-glycero-3-phospho-(1D-myo-inositol-4,5-bisphosphate)</name>
        <dbReference type="ChEBI" id="CHEBI:58456"/>
    </ligand>
</feature>
<feature type="binding site" evidence="2">
    <location>
        <position position="246"/>
    </location>
    <ligand>
        <name>Ca(2+)</name>
        <dbReference type="ChEBI" id="CHEBI:29108"/>
        <label>1</label>
    </ligand>
</feature>
<feature type="binding site" evidence="2">
    <location>
        <position position="246"/>
    </location>
    <ligand>
        <name>Ca(2+)</name>
        <dbReference type="ChEBI" id="CHEBI:29108"/>
        <label>2</label>
    </ligand>
</feature>
<feature type="binding site" evidence="2">
    <location>
        <position position="247"/>
    </location>
    <ligand>
        <name>Ca(2+)</name>
        <dbReference type="ChEBI" id="CHEBI:29108"/>
        <label>2</label>
    </ligand>
</feature>
<feature type="binding site" evidence="2">
    <location>
        <position position="248"/>
    </location>
    <ligand>
        <name>Ca(2+)</name>
        <dbReference type="ChEBI" id="CHEBI:29108"/>
        <label>1</label>
    </ligand>
</feature>
<feature type="binding site" evidence="2">
    <location>
        <position position="248"/>
    </location>
    <ligand>
        <name>Ca(2+)</name>
        <dbReference type="ChEBI" id="CHEBI:29108"/>
        <label>2</label>
    </ligand>
</feature>
<feature type="binding site" evidence="2">
    <location>
        <position position="248"/>
    </location>
    <ligand>
        <name>Ca(2+)</name>
        <dbReference type="ChEBI" id="CHEBI:29108"/>
        <label>3</label>
    </ligand>
</feature>
<feature type="binding site" evidence="2">
    <location>
        <position position="252"/>
    </location>
    <ligand>
        <name>Ca(2+)</name>
        <dbReference type="ChEBI" id="CHEBI:29108"/>
        <label>3</label>
    </ligand>
</feature>
<feature type="binding site" evidence="2">
    <location>
        <position position="254"/>
    </location>
    <ligand>
        <name>Ca(2+)</name>
        <dbReference type="ChEBI" id="CHEBI:29108"/>
        <label>1</label>
    </ligand>
</feature>
<feature type="binding site" evidence="2">
    <location>
        <position position="254"/>
    </location>
    <ligand>
        <name>Ca(2+)</name>
        <dbReference type="ChEBI" id="CHEBI:29108"/>
        <label>3</label>
    </ligand>
</feature>
<feature type="binding site" evidence="6">
    <location>
        <begin position="345"/>
        <end position="353"/>
    </location>
    <ligand>
        <name>ATP</name>
        <dbReference type="ChEBI" id="CHEBI:30616"/>
    </ligand>
</feature>
<feature type="binding site" evidence="6">
    <location>
        <position position="368"/>
    </location>
    <ligand>
        <name>ATP</name>
        <dbReference type="ChEBI" id="CHEBI:30616"/>
    </ligand>
</feature>
<feature type="modified residue" description="N-acetylalanine" evidence="4">
    <location>
        <position position="2"/>
    </location>
</feature>
<feature type="modified residue" description="Phosphoserine" evidence="4">
    <location>
        <position position="10"/>
    </location>
</feature>
<feature type="modified residue" description="Phosphoserine" evidence="4">
    <location>
        <position position="226"/>
    </location>
</feature>
<feature type="modified residue" description="Phosphoserine" evidence="2">
    <location>
        <position position="319"/>
    </location>
</feature>
<feature type="modified residue" description="Phosphothreonine" evidence="1">
    <location>
        <position position="494"/>
    </location>
</feature>
<feature type="modified residue" description="Phosphothreonine" evidence="1">
    <location>
        <position position="495"/>
    </location>
</feature>
<feature type="modified residue" description="Phosphothreonine; by PDPK1" evidence="1">
    <location>
        <position position="497"/>
    </location>
</feature>
<feature type="modified residue" description="Phosphothreonine" evidence="3">
    <location>
        <position position="501"/>
    </location>
</feature>
<feature type="modified residue" description="N6-acetyllysine" evidence="4">
    <location>
        <position position="628"/>
    </location>
</feature>
<feature type="modified residue" description="Phosphothreonine; by MTOR" evidence="17">
    <location>
        <position position="631"/>
    </location>
</feature>
<feature type="modified residue" description="Phosphothreonine; by autocatalysis" evidence="12">
    <location>
        <position position="638"/>
    </location>
</feature>
<feature type="modified residue" description="Phosphoserine" evidence="4">
    <location>
        <position position="651"/>
    </location>
</feature>
<feature type="modified residue" description="Phosphoserine; by MTOR" evidence="12">
    <location>
        <position position="657"/>
    </location>
</feature>
<feature type="modified residue" description="Phosphotyrosine; by SYK" evidence="11">
    <location>
        <position position="658"/>
    </location>
</feature>
<feature type="sequence variant" description="In mutant form UV25." evidence="15">
    <original>I</original>
    <variation>V</variation>
    <location>
        <position position="106"/>
    </location>
</feature>
<feature type="sequence variant" description="In mutant form UV25." evidence="15">
    <original>S</original>
    <variation>G</variation>
    <location>
        <position position="111"/>
    </location>
</feature>
<feature type="sequence variant" description="In mutant form UV25." evidence="15">
    <original>L</original>
    <variation>Q</variation>
    <location>
        <position position="240"/>
    </location>
</feature>
<feature type="sequence variant" description="In mutant form UV25." evidence="15">
    <original>F</original>
    <variation>L</variation>
    <location>
        <position position="339"/>
    </location>
</feature>
<feature type="mutagenesis site" description="Abolished phosphorylation by mTORC2, leading to ubiquitinartion and degradation." evidence="12">
    <original>S</original>
    <variation>A</variation>
    <location>
        <position position="657"/>
    </location>
</feature>
<feature type="sequence conflict" description="In Ref. 1; CAA36908/CAA36907." evidence="21" ref="1">
    <original>D</original>
    <variation>V</variation>
    <location>
        <position position="147"/>
    </location>
</feature>
<feature type="sequence conflict" description="In Ref. 1; CAA36908/CAA36907." evidence="21" ref="1">
    <original>N</original>
    <variation>T</variation>
    <location>
        <position position="218"/>
    </location>
</feature>
<feature type="sequence conflict" description="In Ref. 1; CAA36908/CAA36907." evidence="21" ref="1">
    <original>AH</original>
    <variation>LL</variation>
    <location>
        <begin position="277"/>
        <end position="278"/>
    </location>
</feature>
<feature type="sequence conflict" description="In Ref. 1; CAA36908/CAA36907." evidence="21" ref="1">
    <original>V</original>
    <variation>A</variation>
    <location>
        <position position="313"/>
    </location>
</feature>
<feature type="sequence conflict" description="In Ref. 1; CAA36908/CAA36907." evidence="21" ref="1">
    <original>N</original>
    <variation>D</variation>
    <location>
        <position position="467"/>
    </location>
</feature>
<feature type="sequence conflict" description="In Ref. 1; CAA36908/CAA36907." evidence="21" ref="1">
    <original>N</original>
    <variation>D</variation>
    <location>
        <position position="472"/>
    </location>
</feature>
<feature type="sequence conflict" description="In Ref. 1; CAA36908/CAA36907." evidence="21" ref="1">
    <original>Q</original>
    <variation>H</variation>
    <location>
        <position position="576"/>
    </location>
</feature>
<keyword id="KW-0007">Acetylation</keyword>
<keyword id="KW-0037">Angiogenesis</keyword>
<keyword id="KW-0053">Apoptosis</keyword>
<keyword id="KW-0067">ATP-binding</keyword>
<keyword id="KW-0106">Calcium</keyword>
<keyword id="KW-0130">Cell adhesion</keyword>
<keyword id="KW-1003">Cell membrane</keyword>
<keyword id="KW-0963">Cytoplasm</keyword>
<keyword id="KW-0418">Kinase</keyword>
<keyword id="KW-0472">Membrane</keyword>
<keyword id="KW-0479">Metal-binding</keyword>
<keyword id="KW-0496">Mitochondrion</keyword>
<keyword id="KW-0547">Nucleotide-binding</keyword>
<keyword id="KW-0539">Nucleus</keyword>
<keyword id="KW-0597">Phosphoprotein</keyword>
<keyword id="KW-1185">Reference proteome</keyword>
<keyword id="KW-0677">Repeat</keyword>
<keyword id="KW-0723">Serine/threonine-protein kinase</keyword>
<keyword id="KW-0808">Transferase</keyword>
<keyword id="KW-0862">Zinc</keyword>
<keyword id="KW-0863">Zinc-finger</keyword>
<gene>
    <name type="primary">Prkca</name>
    <name type="synonym">Pkca</name>
</gene>
<protein>
    <recommendedName>
        <fullName>Protein kinase C alpha type</fullName>
        <shortName>PKC-A</shortName>
        <shortName>PKC-alpha</shortName>
        <ecNumber evidence="4">2.7.11.13</ecNumber>
    </recommendedName>
</protein>